<feature type="chain" id="PRO_1000098285" description="3,4-dihydroxy-2-butanone 4-phosphate synthase">
    <location>
        <begin position="1"/>
        <end position="217"/>
    </location>
</feature>
<feature type="binding site" evidence="1">
    <location>
        <begin position="37"/>
        <end position="38"/>
    </location>
    <ligand>
        <name>D-ribulose 5-phosphate</name>
        <dbReference type="ChEBI" id="CHEBI:58121"/>
    </ligand>
</feature>
<feature type="binding site" evidence="1">
    <location>
        <position position="38"/>
    </location>
    <ligand>
        <name>Mg(2+)</name>
        <dbReference type="ChEBI" id="CHEBI:18420"/>
        <label>1</label>
    </ligand>
</feature>
<feature type="binding site" evidence="1">
    <location>
        <position position="38"/>
    </location>
    <ligand>
        <name>Mg(2+)</name>
        <dbReference type="ChEBI" id="CHEBI:18420"/>
        <label>2</label>
    </ligand>
</feature>
<feature type="binding site" evidence="1">
    <location>
        <position position="42"/>
    </location>
    <ligand>
        <name>D-ribulose 5-phosphate</name>
        <dbReference type="ChEBI" id="CHEBI:58121"/>
    </ligand>
</feature>
<feature type="binding site" evidence="1">
    <location>
        <begin position="150"/>
        <end position="154"/>
    </location>
    <ligand>
        <name>D-ribulose 5-phosphate</name>
        <dbReference type="ChEBI" id="CHEBI:58121"/>
    </ligand>
</feature>
<feature type="binding site" evidence="1">
    <location>
        <position position="153"/>
    </location>
    <ligand>
        <name>Mg(2+)</name>
        <dbReference type="ChEBI" id="CHEBI:18420"/>
        <label>2</label>
    </ligand>
</feature>
<feature type="binding site" evidence="1">
    <location>
        <position position="174"/>
    </location>
    <ligand>
        <name>D-ribulose 5-phosphate</name>
        <dbReference type="ChEBI" id="CHEBI:58121"/>
    </ligand>
</feature>
<feature type="site" description="Essential for catalytic activity" evidence="1">
    <location>
        <position position="136"/>
    </location>
</feature>
<feature type="site" description="Essential for catalytic activity" evidence="1">
    <location>
        <position position="174"/>
    </location>
</feature>
<dbReference type="EC" id="4.1.99.12" evidence="1"/>
<dbReference type="EMBL" id="AM933172">
    <property type="protein sequence ID" value="CAR34613.1"/>
    <property type="molecule type" value="Genomic_DNA"/>
</dbReference>
<dbReference type="RefSeq" id="WP_001076978.1">
    <property type="nucleotide sequence ID" value="NC_011294.1"/>
</dbReference>
<dbReference type="SMR" id="B5QZ31"/>
<dbReference type="KEGG" id="set:SEN3037"/>
<dbReference type="HOGENOM" id="CLU_020273_3_0_6"/>
<dbReference type="UniPathway" id="UPA00275">
    <property type="reaction ID" value="UER00399"/>
</dbReference>
<dbReference type="Proteomes" id="UP000000613">
    <property type="component" value="Chromosome"/>
</dbReference>
<dbReference type="GO" id="GO:0005829">
    <property type="term" value="C:cytosol"/>
    <property type="evidence" value="ECO:0007669"/>
    <property type="project" value="TreeGrafter"/>
</dbReference>
<dbReference type="GO" id="GO:0008686">
    <property type="term" value="F:3,4-dihydroxy-2-butanone-4-phosphate synthase activity"/>
    <property type="evidence" value="ECO:0007669"/>
    <property type="project" value="UniProtKB-UniRule"/>
</dbReference>
<dbReference type="GO" id="GO:0000287">
    <property type="term" value="F:magnesium ion binding"/>
    <property type="evidence" value="ECO:0007669"/>
    <property type="project" value="UniProtKB-UniRule"/>
</dbReference>
<dbReference type="GO" id="GO:0030145">
    <property type="term" value="F:manganese ion binding"/>
    <property type="evidence" value="ECO:0007669"/>
    <property type="project" value="UniProtKB-UniRule"/>
</dbReference>
<dbReference type="GO" id="GO:0009231">
    <property type="term" value="P:riboflavin biosynthetic process"/>
    <property type="evidence" value="ECO:0007669"/>
    <property type="project" value="UniProtKB-UniRule"/>
</dbReference>
<dbReference type="FunFam" id="3.90.870.10:FF:000002">
    <property type="entry name" value="3,4-dihydroxy-2-butanone 4-phosphate synthase"/>
    <property type="match status" value="1"/>
</dbReference>
<dbReference type="Gene3D" id="3.90.870.10">
    <property type="entry name" value="DHBP synthase"/>
    <property type="match status" value="1"/>
</dbReference>
<dbReference type="HAMAP" id="MF_00180">
    <property type="entry name" value="RibB"/>
    <property type="match status" value="1"/>
</dbReference>
<dbReference type="InterPro" id="IPR017945">
    <property type="entry name" value="DHBP_synth_RibB-like_a/b_dom"/>
</dbReference>
<dbReference type="InterPro" id="IPR000422">
    <property type="entry name" value="DHBP_synthase_RibB"/>
</dbReference>
<dbReference type="NCBIfam" id="TIGR00506">
    <property type="entry name" value="ribB"/>
    <property type="match status" value="1"/>
</dbReference>
<dbReference type="PANTHER" id="PTHR21327:SF38">
    <property type="entry name" value="3,4-DIHYDROXY-2-BUTANONE 4-PHOSPHATE SYNTHASE"/>
    <property type="match status" value="1"/>
</dbReference>
<dbReference type="PANTHER" id="PTHR21327">
    <property type="entry name" value="GTP CYCLOHYDROLASE II-RELATED"/>
    <property type="match status" value="1"/>
</dbReference>
<dbReference type="Pfam" id="PF00926">
    <property type="entry name" value="DHBP_synthase"/>
    <property type="match status" value="1"/>
</dbReference>
<dbReference type="SUPFAM" id="SSF55821">
    <property type="entry name" value="YrdC/RibB"/>
    <property type="match status" value="1"/>
</dbReference>
<comment type="function">
    <text evidence="1">Catalyzes the conversion of D-ribulose 5-phosphate to formate and 3,4-dihydroxy-2-butanone 4-phosphate.</text>
</comment>
<comment type="catalytic activity">
    <reaction evidence="1">
        <text>D-ribulose 5-phosphate = (2S)-2-hydroxy-3-oxobutyl phosphate + formate + H(+)</text>
        <dbReference type="Rhea" id="RHEA:18457"/>
        <dbReference type="ChEBI" id="CHEBI:15378"/>
        <dbReference type="ChEBI" id="CHEBI:15740"/>
        <dbReference type="ChEBI" id="CHEBI:58121"/>
        <dbReference type="ChEBI" id="CHEBI:58830"/>
        <dbReference type="EC" id="4.1.99.12"/>
    </reaction>
</comment>
<comment type="cofactor">
    <cofactor evidence="1">
        <name>Mg(2+)</name>
        <dbReference type="ChEBI" id="CHEBI:18420"/>
    </cofactor>
    <cofactor evidence="1">
        <name>Mn(2+)</name>
        <dbReference type="ChEBI" id="CHEBI:29035"/>
    </cofactor>
    <text evidence="1">Binds 2 divalent metal cations per subunit. Magnesium or manganese.</text>
</comment>
<comment type="pathway">
    <text evidence="1">Cofactor biosynthesis; riboflavin biosynthesis; 2-hydroxy-3-oxobutyl phosphate from D-ribulose 5-phosphate: step 1/1.</text>
</comment>
<comment type="subunit">
    <text evidence="1">Homodimer.</text>
</comment>
<comment type="similarity">
    <text evidence="1">Belongs to the DHBP synthase family.</text>
</comment>
<name>RIBB_SALEP</name>
<gene>
    <name evidence="1" type="primary">ribB</name>
    <name type="ordered locus">SEN3037</name>
</gene>
<accession>B5QZ31</accession>
<proteinExistence type="inferred from homology"/>
<reference key="1">
    <citation type="journal article" date="2008" name="Genome Res.">
        <title>Comparative genome analysis of Salmonella enteritidis PT4 and Salmonella gallinarum 287/91 provides insights into evolutionary and host adaptation pathways.</title>
        <authorList>
            <person name="Thomson N.R."/>
            <person name="Clayton D.J."/>
            <person name="Windhorst D."/>
            <person name="Vernikos G."/>
            <person name="Davidson S."/>
            <person name="Churcher C."/>
            <person name="Quail M.A."/>
            <person name="Stevens M."/>
            <person name="Jones M.A."/>
            <person name="Watson M."/>
            <person name="Barron A."/>
            <person name="Layton A."/>
            <person name="Pickard D."/>
            <person name="Kingsley R.A."/>
            <person name="Bignell A."/>
            <person name="Clark L."/>
            <person name="Harris B."/>
            <person name="Ormond D."/>
            <person name="Abdellah Z."/>
            <person name="Brooks K."/>
            <person name="Cherevach I."/>
            <person name="Chillingworth T."/>
            <person name="Woodward J."/>
            <person name="Norberczak H."/>
            <person name="Lord A."/>
            <person name="Arrowsmith C."/>
            <person name="Jagels K."/>
            <person name="Moule S."/>
            <person name="Mungall K."/>
            <person name="Saunders M."/>
            <person name="Whitehead S."/>
            <person name="Chabalgoity J.A."/>
            <person name="Maskell D."/>
            <person name="Humphreys T."/>
            <person name="Roberts M."/>
            <person name="Barrow P.A."/>
            <person name="Dougan G."/>
            <person name="Parkhill J."/>
        </authorList>
    </citation>
    <scope>NUCLEOTIDE SEQUENCE [LARGE SCALE GENOMIC DNA]</scope>
    <source>
        <strain>P125109</strain>
    </source>
</reference>
<sequence length="217" mass="23310">MNQTLLSSFGTPFERVELALDALREGRGVMVLDDEDRENEGDMIFPAETMTVEQMALTIRHGSGIVCLCITEDRRKQLDLPMMVENNTSAYGTGFTVTIEAAEGVTTGVSAADRVTTVRAAIKDGAKPSDLNRPGHVFPLRAQAGGVLTRGGHTEATIDLMTLAGFKPAGVLCELTNDDGTMARAPECIAFAGQHNMAVVTIEDLVAYRQAHERKAS</sequence>
<protein>
    <recommendedName>
        <fullName evidence="1">3,4-dihydroxy-2-butanone 4-phosphate synthase</fullName>
        <shortName evidence="1">DHBP synthase</shortName>
        <ecNumber evidence="1">4.1.99.12</ecNumber>
    </recommendedName>
</protein>
<evidence type="ECO:0000255" key="1">
    <source>
        <dbReference type="HAMAP-Rule" id="MF_00180"/>
    </source>
</evidence>
<organism>
    <name type="scientific">Salmonella enteritidis PT4 (strain P125109)</name>
    <dbReference type="NCBI Taxonomy" id="550537"/>
    <lineage>
        <taxon>Bacteria</taxon>
        <taxon>Pseudomonadati</taxon>
        <taxon>Pseudomonadota</taxon>
        <taxon>Gammaproteobacteria</taxon>
        <taxon>Enterobacterales</taxon>
        <taxon>Enterobacteriaceae</taxon>
        <taxon>Salmonella</taxon>
    </lineage>
</organism>
<keyword id="KW-0456">Lyase</keyword>
<keyword id="KW-0460">Magnesium</keyword>
<keyword id="KW-0464">Manganese</keyword>
<keyword id="KW-0479">Metal-binding</keyword>
<keyword id="KW-0686">Riboflavin biosynthesis</keyword>